<name>SPEH_BACCN</name>
<feature type="chain" id="PRO_1000081168" description="S-adenosylmethionine decarboxylase beta chain" evidence="1">
    <location>
        <begin position="1"/>
        <end position="65"/>
    </location>
</feature>
<feature type="chain" id="PRO_1000081169" description="S-adenosylmethionine decarboxylase alpha chain" evidence="1">
    <location>
        <begin position="66"/>
        <end position="130"/>
    </location>
</feature>
<feature type="active site" description="Schiff-base intermediate with substrate; via pyruvic acid" evidence="1">
    <location>
        <position position="66"/>
    </location>
</feature>
<feature type="active site" description="Proton acceptor; for processing activity" evidence="1">
    <location>
        <position position="71"/>
    </location>
</feature>
<feature type="active site" description="Proton donor; for catalytic activity" evidence="1">
    <location>
        <position position="86"/>
    </location>
</feature>
<feature type="site" description="Cleavage (non-hydrolytic); by autolysis" evidence="1">
    <location>
        <begin position="65"/>
        <end position="66"/>
    </location>
</feature>
<feature type="modified residue" description="Pyruvic acid (Ser); by autocatalysis" evidence="1">
    <location>
        <position position="66"/>
    </location>
</feature>
<keyword id="KW-0068">Autocatalytic cleavage</keyword>
<keyword id="KW-0210">Decarboxylase</keyword>
<keyword id="KW-0456">Lyase</keyword>
<keyword id="KW-0620">Polyamine biosynthesis</keyword>
<keyword id="KW-0670">Pyruvate</keyword>
<keyword id="KW-0949">S-adenosyl-L-methionine</keyword>
<keyword id="KW-0704">Schiff base</keyword>
<keyword id="KW-0745">Spermidine biosynthesis</keyword>
<keyword id="KW-0865">Zymogen</keyword>
<sequence length="130" mass="14471">MDTMDTMGRHVIAELWDCDFDKLNDMPFIEQLFVDAALRAGAEVREVAFHKFAPQGVSGVVIISESHLTIHSFPEHGYASIDVYTCGDRIDPNVAAEYIAEGLNAKTRESIELPRGTGSFEIKQRETKAL</sequence>
<dbReference type="EC" id="4.1.1.50" evidence="1"/>
<dbReference type="EMBL" id="CP000764">
    <property type="protein sequence ID" value="ABS23486.1"/>
    <property type="molecule type" value="Genomic_DNA"/>
</dbReference>
<dbReference type="SMR" id="A7GTM8"/>
<dbReference type="STRING" id="315749.Bcer98_3267"/>
<dbReference type="KEGG" id="bcy:Bcer98_3267"/>
<dbReference type="eggNOG" id="COG1586">
    <property type="taxonomic scope" value="Bacteria"/>
</dbReference>
<dbReference type="HOGENOM" id="CLU_125470_2_3_9"/>
<dbReference type="OrthoDB" id="9793120at2"/>
<dbReference type="UniPathway" id="UPA00331">
    <property type="reaction ID" value="UER00451"/>
</dbReference>
<dbReference type="Proteomes" id="UP000002300">
    <property type="component" value="Chromosome"/>
</dbReference>
<dbReference type="GO" id="GO:0005829">
    <property type="term" value="C:cytosol"/>
    <property type="evidence" value="ECO:0007669"/>
    <property type="project" value="TreeGrafter"/>
</dbReference>
<dbReference type="GO" id="GO:0004014">
    <property type="term" value="F:adenosylmethionine decarboxylase activity"/>
    <property type="evidence" value="ECO:0007669"/>
    <property type="project" value="UniProtKB-UniRule"/>
</dbReference>
<dbReference type="GO" id="GO:0008295">
    <property type="term" value="P:spermidine biosynthetic process"/>
    <property type="evidence" value="ECO:0007669"/>
    <property type="project" value="UniProtKB-UniRule"/>
</dbReference>
<dbReference type="FunFam" id="3.30.160.750:FF:000001">
    <property type="entry name" value="S-adenosylmethionine decarboxylase proenzyme"/>
    <property type="match status" value="1"/>
</dbReference>
<dbReference type="FunFam" id="3.30.360.110:FF:000001">
    <property type="entry name" value="S-adenosylmethionine decarboxylase proenzyme"/>
    <property type="match status" value="1"/>
</dbReference>
<dbReference type="Gene3D" id="3.30.160.750">
    <property type="match status" value="1"/>
</dbReference>
<dbReference type="Gene3D" id="3.30.360.110">
    <property type="entry name" value="S-adenosylmethionine decarboxylase domain"/>
    <property type="match status" value="1"/>
</dbReference>
<dbReference type="HAMAP" id="MF_00464">
    <property type="entry name" value="AdoMetDC_1"/>
    <property type="match status" value="1"/>
</dbReference>
<dbReference type="InterPro" id="IPR042286">
    <property type="entry name" value="AdoMetDC_C"/>
</dbReference>
<dbReference type="InterPro" id="IPR003826">
    <property type="entry name" value="AdoMetDC_fam_prok"/>
</dbReference>
<dbReference type="InterPro" id="IPR042284">
    <property type="entry name" value="AdoMetDC_N"/>
</dbReference>
<dbReference type="InterPro" id="IPR016067">
    <property type="entry name" value="S-AdoMet_deCO2ase_core"/>
</dbReference>
<dbReference type="InterPro" id="IPR017716">
    <property type="entry name" value="S-AdoMet_deCOase_pro-enz"/>
</dbReference>
<dbReference type="NCBIfam" id="TIGR03330">
    <property type="entry name" value="SAM_DCase_Bsu"/>
    <property type="match status" value="1"/>
</dbReference>
<dbReference type="PANTHER" id="PTHR33866">
    <property type="entry name" value="S-ADENOSYLMETHIONINE DECARBOXYLASE PROENZYME"/>
    <property type="match status" value="1"/>
</dbReference>
<dbReference type="PANTHER" id="PTHR33866:SF2">
    <property type="entry name" value="S-ADENOSYLMETHIONINE DECARBOXYLASE PROENZYME"/>
    <property type="match status" value="1"/>
</dbReference>
<dbReference type="Pfam" id="PF02675">
    <property type="entry name" value="AdoMet_dc"/>
    <property type="match status" value="1"/>
</dbReference>
<dbReference type="SUPFAM" id="SSF56276">
    <property type="entry name" value="S-adenosylmethionine decarboxylase"/>
    <property type="match status" value="1"/>
</dbReference>
<protein>
    <recommendedName>
        <fullName evidence="1">S-adenosylmethionine decarboxylase proenzyme</fullName>
        <shortName evidence="1">AdoMetDC</shortName>
        <shortName evidence="1">SAMDC</shortName>
        <ecNumber evidence="1">4.1.1.50</ecNumber>
    </recommendedName>
    <component>
        <recommendedName>
            <fullName evidence="1">S-adenosylmethionine decarboxylase beta chain</fullName>
        </recommendedName>
    </component>
    <component>
        <recommendedName>
            <fullName evidence="1">S-adenosylmethionine decarboxylase alpha chain</fullName>
        </recommendedName>
    </component>
</protein>
<proteinExistence type="inferred from homology"/>
<gene>
    <name evidence="1" type="primary">speH</name>
    <name type="ordered locus">Bcer98_3267</name>
</gene>
<accession>A7GTM8</accession>
<reference key="1">
    <citation type="journal article" date="2008" name="Chem. Biol. Interact.">
        <title>Extending the Bacillus cereus group genomics to putative food-borne pathogens of different toxicity.</title>
        <authorList>
            <person name="Lapidus A."/>
            <person name="Goltsman E."/>
            <person name="Auger S."/>
            <person name="Galleron N."/>
            <person name="Segurens B."/>
            <person name="Dossat C."/>
            <person name="Land M.L."/>
            <person name="Broussolle V."/>
            <person name="Brillard J."/>
            <person name="Guinebretiere M.-H."/>
            <person name="Sanchis V."/>
            <person name="Nguen-the C."/>
            <person name="Lereclus D."/>
            <person name="Richardson P."/>
            <person name="Wincker P."/>
            <person name="Weissenbach J."/>
            <person name="Ehrlich S.D."/>
            <person name="Sorokin A."/>
        </authorList>
    </citation>
    <scope>NUCLEOTIDE SEQUENCE [LARGE SCALE GENOMIC DNA]</scope>
    <source>
        <strain>DSM 22905 / CIP 110041 / 391-98 / NVH 391-98</strain>
    </source>
</reference>
<evidence type="ECO:0000255" key="1">
    <source>
        <dbReference type="HAMAP-Rule" id="MF_00464"/>
    </source>
</evidence>
<organism>
    <name type="scientific">Bacillus cytotoxicus (strain DSM 22905 / CIP 110041 / 391-98 / NVH 391-98)</name>
    <dbReference type="NCBI Taxonomy" id="315749"/>
    <lineage>
        <taxon>Bacteria</taxon>
        <taxon>Bacillati</taxon>
        <taxon>Bacillota</taxon>
        <taxon>Bacilli</taxon>
        <taxon>Bacillales</taxon>
        <taxon>Bacillaceae</taxon>
        <taxon>Bacillus</taxon>
        <taxon>Bacillus cereus group</taxon>
    </lineage>
</organism>
<comment type="function">
    <text evidence="1">Catalyzes the decarboxylation of S-adenosylmethionine to S-adenosylmethioninamine (dcAdoMet), the propylamine donor required for the synthesis of the polyamines spermine and spermidine from the diamine putrescine.</text>
</comment>
<comment type="catalytic activity">
    <reaction evidence="1">
        <text>S-adenosyl-L-methionine + H(+) = S-adenosyl 3-(methylsulfanyl)propylamine + CO2</text>
        <dbReference type="Rhea" id="RHEA:15981"/>
        <dbReference type="ChEBI" id="CHEBI:15378"/>
        <dbReference type="ChEBI" id="CHEBI:16526"/>
        <dbReference type="ChEBI" id="CHEBI:57443"/>
        <dbReference type="ChEBI" id="CHEBI:59789"/>
        <dbReference type="EC" id="4.1.1.50"/>
    </reaction>
</comment>
<comment type="cofactor">
    <cofactor evidence="1">
        <name>pyruvate</name>
        <dbReference type="ChEBI" id="CHEBI:15361"/>
    </cofactor>
    <text evidence="1">Binds 1 pyruvoyl group covalently per subunit.</text>
</comment>
<comment type="pathway">
    <text evidence="1">Amine and polyamine biosynthesis; S-adenosylmethioninamine biosynthesis; S-adenosylmethioninamine from S-adenosyl-L-methionine: step 1/1.</text>
</comment>
<comment type="subunit">
    <text evidence="1">Heterotetramer of two alpha and two beta chains arranged as a dimer of alpha/beta heterodimers.</text>
</comment>
<comment type="PTM">
    <text evidence="1">Is synthesized initially as an inactive proenzyme. Formation of the active enzyme involves a self-maturation process in which the active site pyruvoyl group is generated from an internal serine residue via an autocatalytic post-translational modification. Two non-identical subunits are generated from the proenzyme in this reaction, and the pyruvate is formed at the N-terminus of the alpha chain, which is derived from the carboxyl end of the proenzyme. The post-translation cleavage follows an unusual pathway, termed non-hydrolytic serinolysis, in which the side chain hydroxyl group of the serine supplies its oxygen atom to form the C-terminus of the beta chain, while the remainder of the serine residue undergoes an oxidative deamination to produce ammonia and the pyruvoyl group blocking the N-terminus of the alpha chain.</text>
</comment>
<comment type="similarity">
    <text evidence="1">Belongs to the prokaryotic AdoMetDC family. Type 1 subfamily.</text>
</comment>